<evidence type="ECO:0000255" key="1">
    <source>
        <dbReference type="HAMAP-Rule" id="MF_00469"/>
    </source>
</evidence>
<accession>Q3AX81</accession>
<keyword id="KW-0560">Oxidoreductase</keyword>
<keyword id="KW-1185">Reference proteome</keyword>
<keyword id="KW-0819">tRNA processing</keyword>
<feature type="chain" id="PRO_0000242952" description="tRNA uridine(34) hydroxylase">
    <location>
        <begin position="1"/>
        <end position="305"/>
    </location>
</feature>
<feature type="domain" description="Rhodanese" evidence="1">
    <location>
        <begin position="130"/>
        <end position="228"/>
    </location>
</feature>
<feature type="active site" description="Cysteine persulfide intermediate" evidence="1">
    <location>
        <position position="188"/>
    </location>
</feature>
<name>TRHO_SYNS9</name>
<reference key="1">
    <citation type="submission" date="2005-08" db="EMBL/GenBank/DDBJ databases">
        <title>Complete sequence of Synechococcus sp. CC9902.</title>
        <authorList>
            <person name="Copeland A."/>
            <person name="Lucas S."/>
            <person name="Lapidus A."/>
            <person name="Barry K."/>
            <person name="Detter J.C."/>
            <person name="Glavina T."/>
            <person name="Hammon N."/>
            <person name="Israni S."/>
            <person name="Pitluck S."/>
            <person name="Martinez M."/>
            <person name="Schmutz J."/>
            <person name="Larimer F."/>
            <person name="Land M."/>
            <person name="Kyrpides N."/>
            <person name="Ivanova N."/>
            <person name="Richardson P."/>
        </authorList>
    </citation>
    <scope>NUCLEOTIDE SEQUENCE [LARGE SCALE GENOMIC DNA]</scope>
    <source>
        <strain>CC9902</strain>
    </source>
</reference>
<gene>
    <name evidence="1" type="primary">trhO</name>
    <name type="ordered locus">Syncc9902_1395</name>
</gene>
<comment type="function">
    <text evidence="1">Catalyzes oxygen-dependent 5-hydroxyuridine (ho5U) modification at position 34 in tRNAs.</text>
</comment>
<comment type="catalytic activity">
    <reaction evidence="1">
        <text>uridine(34) in tRNA + AH2 + O2 = 5-hydroxyuridine(34) in tRNA + A + H2O</text>
        <dbReference type="Rhea" id="RHEA:64224"/>
        <dbReference type="Rhea" id="RHEA-COMP:11727"/>
        <dbReference type="Rhea" id="RHEA-COMP:13381"/>
        <dbReference type="ChEBI" id="CHEBI:13193"/>
        <dbReference type="ChEBI" id="CHEBI:15377"/>
        <dbReference type="ChEBI" id="CHEBI:15379"/>
        <dbReference type="ChEBI" id="CHEBI:17499"/>
        <dbReference type="ChEBI" id="CHEBI:65315"/>
        <dbReference type="ChEBI" id="CHEBI:136877"/>
    </reaction>
</comment>
<comment type="similarity">
    <text evidence="1">Belongs to the TrhO family.</text>
</comment>
<organism>
    <name type="scientific">Synechococcus sp. (strain CC9902)</name>
    <dbReference type="NCBI Taxonomy" id="316279"/>
    <lineage>
        <taxon>Bacteria</taxon>
        <taxon>Bacillati</taxon>
        <taxon>Cyanobacteriota</taxon>
        <taxon>Cyanophyceae</taxon>
        <taxon>Synechococcales</taxon>
        <taxon>Synechococcaceae</taxon>
        <taxon>Synechococcus</taxon>
    </lineage>
</organism>
<dbReference type="EC" id="1.14.-.-" evidence="1"/>
<dbReference type="EMBL" id="CP000097">
    <property type="protein sequence ID" value="ABB26359.1"/>
    <property type="molecule type" value="Genomic_DNA"/>
</dbReference>
<dbReference type="RefSeq" id="WP_011360182.1">
    <property type="nucleotide sequence ID" value="NC_007513.1"/>
</dbReference>
<dbReference type="SMR" id="Q3AX81"/>
<dbReference type="STRING" id="316279.Syncc9902_1395"/>
<dbReference type="KEGG" id="sye:Syncc9902_1395"/>
<dbReference type="eggNOG" id="COG1054">
    <property type="taxonomic scope" value="Bacteria"/>
</dbReference>
<dbReference type="HOGENOM" id="CLU_038878_0_0_3"/>
<dbReference type="OrthoDB" id="9778326at2"/>
<dbReference type="Proteomes" id="UP000002712">
    <property type="component" value="Chromosome"/>
</dbReference>
<dbReference type="GO" id="GO:0016705">
    <property type="term" value="F:oxidoreductase activity, acting on paired donors, with incorporation or reduction of molecular oxygen"/>
    <property type="evidence" value="ECO:0007669"/>
    <property type="project" value="UniProtKB-UniRule"/>
</dbReference>
<dbReference type="GO" id="GO:0006400">
    <property type="term" value="P:tRNA modification"/>
    <property type="evidence" value="ECO:0007669"/>
    <property type="project" value="UniProtKB-UniRule"/>
</dbReference>
<dbReference type="CDD" id="cd01518">
    <property type="entry name" value="RHOD_YceA"/>
    <property type="match status" value="1"/>
</dbReference>
<dbReference type="Gene3D" id="3.30.70.100">
    <property type="match status" value="1"/>
</dbReference>
<dbReference type="Gene3D" id="3.40.250.10">
    <property type="entry name" value="Rhodanese-like domain"/>
    <property type="match status" value="1"/>
</dbReference>
<dbReference type="HAMAP" id="MF_00469">
    <property type="entry name" value="TrhO"/>
    <property type="match status" value="1"/>
</dbReference>
<dbReference type="InterPro" id="IPR001763">
    <property type="entry name" value="Rhodanese-like_dom"/>
</dbReference>
<dbReference type="InterPro" id="IPR036873">
    <property type="entry name" value="Rhodanese-like_dom_sf"/>
</dbReference>
<dbReference type="InterPro" id="IPR020936">
    <property type="entry name" value="TrhO"/>
</dbReference>
<dbReference type="InterPro" id="IPR040503">
    <property type="entry name" value="TRHO_N"/>
</dbReference>
<dbReference type="NCBIfam" id="NF001136">
    <property type="entry name" value="PRK00142.1-4"/>
    <property type="match status" value="1"/>
</dbReference>
<dbReference type="PANTHER" id="PTHR43268:SF3">
    <property type="entry name" value="RHODANESE-LIKE DOMAIN-CONTAINING PROTEIN 7-RELATED"/>
    <property type="match status" value="1"/>
</dbReference>
<dbReference type="PANTHER" id="PTHR43268">
    <property type="entry name" value="THIOSULFATE SULFURTRANSFERASE/RHODANESE-LIKE DOMAIN-CONTAINING PROTEIN 2"/>
    <property type="match status" value="1"/>
</dbReference>
<dbReference type="Pfam" id="PF00581">
    <property type="entry name" value="Rhodanese"/>
    <property type="match status" value="1"/>
</dbReference>
<dbReference type="Pfam" id="PF17773">
    <property type="entry name" value="UPF0176_N"/>
    <property type="match status" value="1"/>
</dbReference>
<dbReference type="SMART" id="SM00450">
    <property type="entry name" value="RHOD"/>
    <property type="match status" value="1"/>
</dbReference>
<dbReference type="SUPFAM" id="SSF52821">
    <property type="entry name" value="Rhodanese/Cell cycle control phosphatase"/>
    <property type="match status" value="1"/>
</dbReference>
<dbReference type="PROSITE" id="PS50206">
    <property type="entry name" value="RHODANESE_3"/>
    <property type="match status" value="1"/>
</dbReference>
<protein>
    <recommendedName>
        <fullName evidence="1">tRNA uridine(34) hydroxylase</fullName>
        <ecNumber evidence="1">1.14.-.-</ecNumber>
    </recommendedName>
    <alternativeName>
        <fullName evidence="1">tRNA hydroxylation protein O</fullName>
    </alternativeName>
</protein>
<proteinExistence type="inferred from homology"/>
<sequence>MSRLQVAAFYAFTPLNEQQRASLLSDLPDMAMTNSVLGSILVAHEGVNGTISGPEAGVEALLQSLRTSLALGCEHFERLEVKRSWADQAVFRRFKARAKKEIVTMGVTSVNPRQNVGTYVDPKDWNDLVDDPDTLVIDTRNSYETAIGSFEGSLDPSTESFRDFPAWAEASLRPLMNDQSPKRIAMFCTGGIRCEKASSYLQSNGFGEVLHLRGGILNYLGEIPEQESRWQGECFVFDQRVALNHQLEPGVHSLCHACGLPLSPSDRADPSYIKGVQCIHCIDRFSESDRARFLMRQQQFDQTPT</sequence>